<organism>
    <name type="scientific">Cupriavidus metallidurans (strain ATCC 43123 / DSM 2839 / NBRC 102507 / CH34)</name>
    <name type="common">Ralstonia metallidurans</name>
    <dbReference type="NCBI Taxonomy" id="266264"/>
    <lineage>
        <taxon>Bacteria</taxon>
        <taxon>Pseudomonadati</taxon>
        <taxon>Pseudomonadota</taxon>
        <taxon>Betaproteobacteria</taxon>
        <taxon>Burkholderiales</taxon>
        <taxon>Burkholderiaceae</taxon>
        <taxon>Cupriavidus</taxon>
    </lineage>
</organism>
<keyword id="KW-1185">Reference proteome</keyword>
<keyword id="KW-0687">Ribonucleoprotein</keyword>
<keyword id="KW-0689">Ribosomal protein</keyword>
<proteinExistence type="inferred from homology"/>
<dbReference type="EMBL" id="CP000352">
    <property type="protein sequence ID" value="ABF09309.1"/>
    <property type="molecule type" value="Genomic_DNA"/>
</dbReference>
<dbReference type="RefSeq" id="WP_008644820.1">
    <property type="nucleotide sequence ID" value="NC_007973.1"/>
</dbReference>
<dbReference type="SMR" id="Q1LKL7"/>
<dbReference type="STRING" id="266264.Rmet_2432"/>
<dbReference type="GeneID" id="92817439"/>
<dbReference type="KEGG" id="rme:Rmet_2432"/>
<dbReference type="eggNOG" id="COG0333">
    <property type="taxonomic scope" value="Bacteria"/>
</dbReference>
<dbReference type="HOGENOM" id="CLU_129084_2_1_4"/>
<dbReference type="Proteomes" id="UP000002429">
    <property type="component" value="Chromosome"/>
</dbReference>
<dbReference type="GO" id="GO:0015934">
    <property type="term" value="C:large ribosomal subunit"/>
    <property type="evidence" value="ECO:0007669"/>
    <property type="project" value="InterPro"/>
</dbReference>
<dbReference type="GO" id="GO:0003735">
    <property type="term" value="F:structural constituent of ribosome"/>
    <property type="evidence" value="ECO:0007669"/>
    <property type="project" value="InterPro"/>
</dbReference>
<dbReference type="GO" id="GO:0006412">
    <property type="term" value="P:translation"/>
    <property type="evidence" value="ECO:0007669"/>
    <property type="project" value="UniProtKB-UniRule"/>
</dbReference>
<dbReference type="HAMAP" id="MF_00340">
    <property type="entry name" value="Ribosomal_bL32"/>
    <property type="match status" value="1"/>
</dbReference>
<dbReference type="InterPro" id="IPR002677">
    <property type="entry name" value="Ribosomal_bL32"/>
</dbReference>
<dbReference type="InterPro" id="IPR044957">
    <property type="entry name" value="Ribosomal_bL32_bact"/>
</dbReference>
<dbReference type="InterPro" id="IPR011332">
    <property type="entry name" value="Ribosomal_zn-bd"/>
</dbReference>
<dbReference type="NCBIfam" id="TIGR01031">
    <property type="entry name" value="rpmF_bact"/>
    <property type="match status" value="1"/>
</dbReference>
<dbReference type="PANTHER" id="PTHR35534">
    <property type="entry name" value="50S RIBOSOMAL PROTEIN L32"/>
    <property type="match status" value="1"/>
</dbReference>
<dbReference type="PANTHER" id="PTHR35534:SF1">
    <property type="entry name" value="LARGE RIBOSOMAL SUBUNIT PROTEIN BL32"/>
    <property type="match status" value="1"/>
</dbReference>
<dbReference type="Pfam" id="PF01783">
    <property type="entry name" value="Ribosomal_L32p"/>
    <property type="match status" value="1"/>
</dbReference>
<dbReference type="SUPFAM" id="SSF57829">
    <property type="entry name" value="Zn-binding ribosomal proteins"/>
    <property type="match status" value="1"/>
</dbReference>
<sequence>MAVQQNKKSPSKRGMHRSHDHLSVAPLAVEPTTGETHLRHHVSPNGYYRGRKVIKTKND</sequence>
<feature type="chain" id="PRO_0000296540" description="Large ribosomal subunit protein bL32">
    <location>
        <begin position="1"/>
        <end position="59"/>
    </location>
</feature>
<feature type="region of interest" description="Disordered" evidence="2">
    <location>
        <begin position="1"/>
        <end position="59"/>
    </location>
</feature>
<feature type="compositionally biased region" description="Basic residues" evidence="2">
    <location>
        <begin position="9"/>
        <end position="19"/>
    </location>
</feature>
<feature type="compositionally biased region" description="Basic residues" evidence="2">
    <location>
        <begin position="49"/>
        <end position="59"/>
    </location>
</feature>
<evidence type="ECO:0000255" key="1">
    <source>
        <dbReference type="HAMAP-Rule" id="MF_00340"/>
    </source>
</evidence>
<evidence type="ECO:0000256" key="2">
    <source>
        <dbReference type="SAM" id="MobiDB-lite"/>
    </source>
</evidence>
<evidence type="ECO:0000305" key="3"/>
<comment type="similarity">
    <text evidence="1">Belongs to the bacterial ribosomal protein bL32 family.</text>
</comment>
<protein>
    <recommendedName>
        <fullName evidence="1">Large ribosomal subunit protein bL32</fullName>
    </recommendedName>
    <alternativeName>
        <fullName evidence="3">50S ribosomal protein L32</fullName>
    </alternativeName>
</protein>
<gene>
    <name evidence="1" type="primary">rpmF</name>
    <name type="ordered locus">Rmet_2432</name>
</gene>
<accession>Q1LKL7</accession>
<reference key="1">
    <citation type="journal article" date="2010" name="PLoS ONE">
        <title>The complete genome sequence of Cupriavidus metallidurans strain CH34, a master survivalist in harsh and anthropogenic environments.</title>
        <authorList>
            <person name="Janssen P.J."/>
            <person name="Van Houdt R."/>
            <person name="Moors H."/>
            <person name="Monsieurs P."/>
            <person name="Morin N."/>
            <person name="Michaux A."/>
            <person name="Benotmane M.A."/>
            <person name="Leys N."/>
            <person name="Vallaeys T."/>
            <person name="Lapidus A."/>
            <person name="Monchy S."/>
            <person name="Medigue C."/>
            <person name="Taghavi S."/>
            <person name="McCorkle S."/>
            <person name="Dunn J."/>
            <person name="van der Lelie D."/>
            <person name="Mergeay M."/>
        </authorList>
    </citation>
    <scope>NUCLEOTIDE SEQUENCE [LARGE SCALE GENOMIC DNA]</scope>
    <source>
        <strain>ATCC 43123 / DSM 2839 / NBRC 102507 / CH34</strain>
    </source>
</reference>
<name>RL32_CUPMC</name>